<protein>
    <recommendedName>
        <fullName evidence="1">GTPase Obg</fullName>
        <ecNumber evidence="1">3.6.5.-</ecNumber>
    </recommendedName>
    <alternativeName>
        <fullName evidence="1">GTP-binding protein Obg</fullName>
    </alternativeName>
</protein>
<name>OBG_LISIN</name>
<organism>
    <name type="scientific">Listeria innocua serovar 6a (strain ATCC BAA-680 / CLIP 11262)</name>
    <dbReference type="NCBI Taxonomy" id="272626"/>
    <lineage>
        <taxon>Bacteria</taxon>
        <taxon>Bacillati</taxon>
        <taxon>Bacillota</taxon>
        <taxon>Bacilli</taxon>
        <taxon>Bacillales</taxon>
        <taxon>Listeriaceae</taxon>
        <taxon>Listeria</taxon>
    </lineage>
</organism>
<keyword id="KW-0963">Cytoplasm</keyword>
<keyword id="KW-0342">GTP-binding</keyword>
<keyword id="KW-0378">Hydrolase</keyword>
<keyword id="KW-0460">Magnesium</keyword>
<keyword id="KW-0479">Metal-binding</keyword>
<keyword id="KW-0547">Nucleotide-binding</keyword>
<comment type="function">
    <text evidence="1">An essential GTPase which binds GTP, GDP and possibly (p)ppGpp with moderate affinity, with high nucleotide exchange rates and a fairly low GTP hydrolysis rate. Plays a role in control of the cell cycle, stress response, ribosome biogenesis and in those bacteria that undergo differentiation, in morphogenesis control.</text>
</comment>
<comment type="cofactor">
    <cofactor evidence="1">
        <name>Mg(2+)</name>
        <dbReference type="ChEBI" id="CHEBI:18420"/>
    </cofactor>
</comment>
<comment type="subunit">
    <text evidence="1">Monomer.</text>
</comment>
<comment type="subcellular location">
    <subcellularLocation>
        <location evidence="1">Cytoplasm</location>
    </subcellularLocation>
</comment>
<comment type="similarity">
    <text evidence="1">Belongs to the TRAFAC class OBG-HflX-like GTPase superfamily. OBG GTPase family.</text>
</comment>
<feature type="chain" id="PRO_0000386022" description="GTPase Obg">
    <location>
        <begin position="1"/>
        <end position="429"/>
    </location>
</feature>
<feature type="domain" description="Obg" evidence="3">
    <location>
        <begin position="1"/>
        <end position="158"/>
    </location>
</feature>
<feature type="domain" description="OBG-type G" evidence="1">
    <location>
        <begin position="159"/>
        <end position="329"/>
    </location>
</feature>
<feature type="domain" description="OCT" evidence="2">
    <location>
        <begin position="351"/>
        <end position="429"/>
    </location>
</feature>
<feature type="region of interest" description="Disordered" evidence="4">
    <location>
        <begin position="124"/>
        <end position="145"/>
    </location>
</feature>
<feature type="binding site" evidence="1">
    <location>
        <begin position="165"/>
        <end position="172"/>
    </location>
    <ligand>
        <name>GTP</name>
        <dbReference type="ChEBI" id="CHEBI:37565"/>
    </ligand>
</feature>
<feature type="binding site" evidence="1">
    <location>
        <position position="172"/>
    </location>
    <ligand>
        <name>Mg(2+)</name>
        <dbReference type="ChEBI" id="CHEBI:18420"/>
    </ligand>
</feature>
<feature type="binding site" evidence="1">
    <location>
        <begin position="190"/>
        <end position="194"/>
    </location>
    <ligand>
        <name>GTP</name>
        <dbReference type="ChEBI" id="CHEBI:37565"/>
    </ligand>
</feature>
<feature type="binding site" evidence="1">
    <location>
        <position position="192"/>
    </location>
    <ligand>
        <name>Mg(2+)</name>
        <dbReference type="ChEBI" id="CHEBI:18420"/>
    </ligand>
</feature>
<feature type="binding site" evidence="1">
    <location>
        <begin position="212"/>
        <end position="215"/>
    </location>
    <ligand>
        <name>GTP</name>
        <dbReference type="ChEBI" id="CHEBI:37565"/>
    </ligand>
</feature>
<feature type="binding site" evidence="1">
    <location>
        <begin position="282"/>
        <end position="285"/>
    </location>
    <ligand>
        <name>GTP</name>
        <dbReference type="ChEBI" id="CHEBI:37565"/>
    </ligand>
</feature>
<feature type="binding site" evidence="1">
    <location>
        <begin position="310"/>
        <end position="312"/>
    </location>
    <ligand>
        <name>GTP</name>
        <dbReference type="ChEBI" id="CHEBI:37565"/>
    </ligand>
</feature>
<gene>
    <name evidence="1" type="primary">obg</name>
    <name type="ordered locus">lin1572</name>
</gene>
<accession>Q92BH7</accession>
<evidence type="ECO:0000255" key="1">
    <source>
        <dbReference type="HAMAP-Rule" id="MF_01454"/>
    </source>
</evidence>
<evidence type="ECO:0000255" key="2">
    <source>
        <dbReference type="PROSITE-ProRule" id="PRU01229"/>
    </source>
</evidence>
<evidence type="ECO:0000255" key="3">
    <source>
        <dbReference type="PROSITE-ProRule" id="PRU01231"/>
    </source>
</evidence>
<evidence type="ECO:0000256" key="4">
    <source>
        <dbReference type="SAM" id="MobiDB-lite"/>
    </source>
</evidence>
<proteinExistence type="inferred from homology"/>
<sequence>MFVDQVKIYVKAGNGGDGMVAFRREKFVPNGGPAGGDGGKGADVVFVVDEGLRTLVDFRFKRIFKAEHGDHGMSKSMHGRGAEDLVVKVPQGTIVKDIDTGEIIADLVAHGQRAVIAKAGRGGRGNKRFATPANPAPELSENGEPGQERNVQLELKVLADVGLVGFPSVGKSTLLSVVSAARPKIAAYHFTTIVPNLGMVDAGDGRSFVMADLPGLIEGASQGVGLGHQFLRHIERTRVIVHVIDMSGSEGRVPYEDYMAINNELEQYNLRLMERPQIIVANKMDMPDAEENLKEFKTKIAEDIPVFPISAVTKTGLRELLLAIADKLETTPEFPLNEILEQEDEDTVLYKYVAEEPDFEITREPDGTFVLSGAKIERLFTMTNFERDASISRFARQLRAMGVDEALRKRGAKDGDIVRLLDYEFEFMD</sequence>
<dbReference type="EC" id="3.6.5.-" evidence="1"/>
<dbReference type="EMBL" id="AL596169">
    <property type="protein sequence ID" value="CAC96803.1"/>
    <property type="molecule type" value="Genomic_DNA"/>
</dbReference>
<dbReference type="PIR" id="AC1629">
    <property type="entry name" value="AC1629"/>
</dbReference>
<dbReference type="RefSeq" id="WP_010991596.1">
    <property type="nucleotide sequence ID" value="NC_003212.1"/>
</dbReference>
<dbReference type="SMR" id="Q92BH7"/>
<dbReference type="STRING" id="272626.gene:17565903"/>
<dbReference type="KEGG" id="lin:lin1572"/>
<dbReference type="eggNOG" id="COG0536">
    <property type="taxonomic scope" value="Bacteria"/>
</dbReference>
<dbReference type="HOGENOM" id="CLU_011747_2_1_9"/>
<dbReference type="OrthoDB" id="9807318at2"/>
<dbReference type="Proteomes" id="UP000002513">
    <property type="component" value="Chromosome"/>
</dbReference>
<dbReference type="GO" id="GO:0005737">
    <property type="term" value="C:cytoplasm"/>
    <property type="evidence" value="ECO:0007669"/>
    <property type="project" value="UniProtKB-SubCell"/>
</dbReference>
<dbReference type="GO" id="GO:0005525">
    <property type="term" value="F:GTP binding"/>
    <property type="evidence" value="ECO:0007669"/>
    <property type="project" value="UniProtKB-UniRule"/>
</dbReference>
<dbReference type="GO" id="GO:0003924">
    <property type="term" value="F:GTPase activity"/>
    <property type="evidence" value="ECO:0007669"/>
    <property type="project" value="UniProtKB-UniRule"/>
</dbReference>
<dbReference type="GO" id="GO:0000287">
    <property type="term" value="F:magnesium ion binding"/>
    <property type="evidence" value="ECO:0007669"/>
    <property type="project" value="InterPro"/>
</dbReference>
<dbReference type="GO" id="GO:0042254">
    <property type="term" value="P:ribosome biogenesis"/>
    <property type="evidence" value="ECO:0007669"/>
    <property type="project" value="UniProtKB-UniRule"/>
</dbReference>
<dbReference type="CDD" id="cd01898">
    <property type="entry name" value="Obg"/>
    <property type="match status" value="1"/>
</dbReference>
<dbReference type="FunFam" id="2.70.210.12:FF:000001">
    <property type="entry name" value="GTPase Obg"/>
    <property type="match status" value="1"/>
</dbReference>
<dbReference type="FunFam" id="3.40.50.300:FF:000515">
    <property type="entry name" value="GTPase Obg"/>
    <property type="match status" value="1"/>
</dbReference>
<dbReference type="Gene3D" id="3.30.300.350">
    <property type="entry name" value="GTP-binding protein OBG, C-terminal domain"/>
    <property type="match status" value="1"/>
</dbReference>
<dbReference type="Gene3D" id="2.70.210.12">
    <property type="entry name" value="GTP1/OBG domain"/>
    <property type="match status" value="1"/>
</dbReference>
<dbReference type="Gene3D" id="3.40.50.300">
    <property type="entry name" value="P-loop containing nucleotide triphosphate hydrolases"/>
    <property type="match status" value="1"/>
</dbReference>
<dbReference type="HAMAP" id="MF_01454">
    <property type="entry name" value="GTPase_Obg"/>
    <property type="match status" value="1"/>
</dbReference>
<dbReference type="InterPro" id="IPR031167">
    <property type="entry name" value="G_OBG"/>
</dbReference>
<dbReference type="InterPro" id="IPR006073">
    <property type="entry name" value="GTP-bd"/>
</dbReference>
<dbReference type="InterPro" id="IPR014100">
    <property type="entry name" value="GTP-bd_Obg/CgtA"/>
</dbReference>
<dbReference type="InterPro" id="IPR036346">
    <property type="entry name" value="GTP-bd_prot_GTP1/OBG_C_sf"/>
</dbReference>
<dbReference type="InterPro" id="IPR006074">
    <property type="entry name" value="GTP1-OBG_CS"/>
</dbReference>
<dbReference type="InterPro" id="IPR006169">
    <property type="entry name" value="GTP1_OBG_dom"/>
</dbReference>
<dbReference type="InterPro" id="IPR036726">
    <property type="entry name" value="GTP1_OBG_dom_sf"/>
</dbReference>
<dbReference type="InterPro" id="IPR045086">
    <property type="entry name" value="OBG_GTPase"/>
</dbReference>
<dbReference type="InterPro" id="IPR015349">
    <property type="entry name" value="OCT_dom"/>
</dbReference>
<dbReference type="InterPro" id="IPR027417">
    <property type="entry name" value="P-loop_NTPase"/>
</dbReference>
<dbReference type="InterPro" id="IPR005225">
    <property type="entry name" value="Small_GTP-bd"/>
</dbReference>
<dbReference type="NCBIfam" id="TIGR02729">
    <property type="entry name" value="Obg_CgtA"/>
    <property type="match status" value="1"/>
</dbReference>
<dbReference type="NCBIfam" id="TIGR03595">
    <property type="entry name" value="Obg_CgtA_exten"/>
    <property type="match status" value="1"/>
</dbReference>
<dbReference type="NCBIfam" id="NF008954">
    <property type="entry name" value="PRK12296.1"/>
    <property type="match status" value="1"/>
</dbReference>
<dbReference type="NCBIfam" id="NF008955">
    <property type="entry name" value="PRK12297.1"/>
    <property type="match status" value="1"/>
</dbReference>
<dbReference type="NCBIfam" id="NF008956">
    <property type="entry name" value="PRK12299.1"/>
    <property type="match status" value="1"/>
</dbReference>
<dbReference type="NCBIfam" id="TIGR00231">
    <property type="entry name" value="small_GTP"/>
    <property type="match status" value="1"/>
</dbReference>
<dbReference type="PANTHER" id="PTHR11702">
    <property type="entry name" value="DEVELOPMENTALLY REGULATED GTP-BINDING PROTEIN-RELATED"/>
    <property type="match status" value="1"/>
</dbReference>
<dbReference type="PANTHER" id="PTHR11702:SF31">
    <property type="entry name" value="MITOCHONDRIAL RIBOSOME-ASSOCIATED GTPASE 2"/>
    <property type="match status" value="1"/>
</dbReference>
<dbReference type="Pfam" id="PF09269">
    <property type="entry name" value="DUF1967"/>
    <property type="match status" value="1"/>
</dbReference>
<dbReference type="Pfam" id="PF01018">
    <property type="entry name" value="GTP1_OBG"/>
    <property type="match status" value="1"/>
</dbReference>
<dbReference type="Pfam" id="PF01926">
    <property type="entry name" value="MMR_HSR1"/>
    <property type="match status" value="1"/>
</dbReference>
<dbReference type="PIRSF" id="PIRSF002401">
    <property type="entry name" value="GTP_bd_Obg/CgtA"/>
    <property type="match status" value="1"/>
</dbReference>
<dbReference type="PRINTS" id="PR00326">
    <property type="entry name" value="GTP1OBG"/>
</dbReference>
<dbReference type="SUPFAM" id="SSF102741">
    <property type="entry name" value="Obg GTP-binding protein C-terminal domain"/>
    <property type="match status" value="1"/>
</dbReference>
<dbReference type="SUPFAM" id="SSF82051">
    <property type="entry name" value="Obg GTP-binding protein N-terminal domain"/>
    <property type="match status" value="1"/>
</dbReference>
<dbReference type="SUPFAM" id="SSF52540">
    <property type="entry name" value="P-loop containing nucleoside triphosphate hydrolases"/>
    <property type="match status" value="1"/>
</dbReference>
<dbReference type="PROSITE" id="PS51710">
    <property type="entry name" value="G_OBG"/>
    <property type="match status" value="1"/>
</dbReference>
<dbReference type="PROSITE" id="PS00905">
    <property type="entry name" value="GTP1_OBG"/>
    <property type="match status" value="1"/>
</dbReference>
<dbReference type="PROSITE" id="PS51883">
    <property type="entry name" value="OBG"/>
    <property type="match status" value="1"/>
</dbReference>
<dbReference type="PROSITE" id="PS51881">
    <property type="entry name" value="OCT"/>
    <property type="match status" value="1"/>
</dbReference>
<reference key="1">
    <citation type="journal article" date="2001" name="Science">
        <title>Comparative genomics of Listeria species.</title>
        <authorList>
            <person name="Glaser P."/>
            <person name="Frangeul L."/>
            <person name="Buchrieser C."/>
            <person name="Rusniok C."/>
            <person name="Amend A."/>
            <person name="Baquero F."/>
            <person name="Berche P."/>
            <person name="Bloecker H."/>
            <person name="Brandt P."/>
            <person name="Chakraborty T."/>
            <person name="Charbit A."/>
            <person name="Chetouani F."/>
            <person name="Couve E."/>
            <person name="de Daruvar A."/>
            <person name="Dehoux P."/>
            <person name="Domann E."/>
            <person name="Dominguez-Bernal G."/>
            <person name="Duchaud E."/>
            <person name="Durant L."/>
            <person name="Dussurget O."/>
            <person name="Entian K.-D."/>
            <person name="Fsihi H."/>
            <person name="Garcia-del Portillo F."/>
            <person name="Garrido P."/>
            <person name="Gautier L."/>
            <person name="Goebel W."/>
            <person name="Gomez-Lopez N."/>
            <person name="Hain T."/>
            <person name="Hauf J."/>
            <person name="Jackson D."/>
            <person name="Jones L.-M."/>
            <person name="Kaerst U."/>
            <person name="Kreft J."/>
            <person name="Kuhn M."/>
            <person name="Kunst F."/>
            <person name="Kurapkat G."/>
            <person name="Madueno E."/>
            <person name="Maitournam A."/>
            <person name="Mata Vicente J."/>
            <person name="Ng E."/>
            <person name="Nedjari H."/>
            <person name="Nordsiek G."/>
            <person name="Novella S."/>
            <person name="de Pablos B."/>
            <person name="Perez-Diaz J.-C."/>
            <person name="Purcell R."/>
            <person name="Remmel B."/>
            <person name="Rose M."/>
            <person name="Schlueter T."/>
            <person name="Simoes N."/>
            <person name="Tierrez A."/>
            <person name="Vazquez-Boland J.-A."/>
            <person name="Voss H."/>
            <person name="Wehland J."/>
            <person name="Cossart P."/>
        </authorList>
    </citation>
    <scope>NUCLEOTIDE SEQUENCE [LARGE SCALE GENOMIC DNA]</scope>
    <source>
        <strain>ATCC BAA-680 / CLIP 11262</strain>
    </source>
</reference>